<dbReference type="EMBL" id="CP000362">
    <property type="protein sequence ID" value="ABG32558.1"/>
    <property type="molecule type" value="Genomic_DNA"/>
</dbReference>
<dbReference type="RefSeq" id="WP_011569174.1">
    <property type="nucleotide sequence ID" value="NC_008209.1"/>
</dbReference>
<dbReference type="SMR" id="Q164N5"/>
<dbReference type="STRING" id="375451.RD1_3045"/>
<dbReference type="KEGG" id="rde:RD1_3045"/>
<dbReference type="eggNOG" id="COG0359">
    <property type="taxonomic scope" value="Bacteria"/>
</dbReference>
<dbReference type="HOGENOM" id="CLU_078938_1_0_5"/>
<dbReference type="OrthoDB" id="9788336at2"/>
<dbReference type="Proteomes" id="UP000007029">
    <property type="component" value="Chromosome"/>
</dbReference>
<dbReference type="GO" id="GO:1990904">
    <property type="term" value="C:ribonucleoprotein complex"/>
    <property type="evidence" value="ECO:0007669"/>
    <property type="project" value="UniProtKB-KW"/>
</dbReference>
<dbReference type="GO" id="GO:0005840">
    <property type="term" value="C:ribosome"/>
    <property type="evidence" value="ECO:0007669"/>
    <property type="project" value="UniProtKB-KW"/>
</dbReference>
<dbReference type="GO" id="GO:0019843">
    <property type="term" value="F:rRNA binding"/>
    <property type="evidence" value="ECO:0007669"/>
    <property type="project" value="UniProtKB-UniRule"/>
</dbReference>
<dbReference type="GO" id="GO:0003735">
    <property type="term" value="F:structural constituent of ribosome"/>
    <property type="evidence" value="ECO:0007669"/>
    <property type="project" value="InterPro"/>
</dbReference>
<dbReference type="GO" id="GO:0006412">
    <property type="term" value="P:translation"/>
    <property type="evidence" value="ECO:0007669"/>
    <property type="project" value="UniProtKB-UniRule"/>
</dbReference>
<dbReference type="Gene3D" id="3.10.430.100">
    <property type="entry name" value="Ribosomal protein L9, C-terminal domain"/>
    <property type="match status" value="1"/>
</dbReference>
<dbReference type="Gene3D" id="3.40.5.10">
    <property type="entry name" value="Ribosomal protein L9, N-terminal domain"/>
    <property type="match status" value="1"/>
</dbReference>
<dbReference type="HAMAP" id="MF_00503">
    <property type="entry name" value="Ribosomal_bL9"/>
    <property type="match status" value="1"/>
</dbReference>
<dbReference type="InterPro" id="IPR000244">
    <property type="entry name" value="Ribosomal_bL9"/>
</dbReference>
<dbReference type="InterPro" id="IPR009027">
    <property type="entry name" value="Ribosomal_bL9/RNase_H1_N"/>
</dbReference>
<dbReference type="InterPro" id="IPR020594">
    <property type="entry name" value="Ribosomal_bL9_bac/chp"/>
</dbReference>
<dbReference type="InterPro" id="IPR020069">
    <property type="entry name" value="Ribosomal_bL9_C"/>
</dbReference>
<dbReference type="InterPro" id="IPR036791">
    <property type="entry name" value="Ribosomal_bL9_C_sf"/>
</dbReference>
<dbReference type="InterPro" id="IPR020070">
    <property type="entry name" value="Ribosomal_bL9_N"/>
</dbReference>
<dbReference type="InterPro" id="IPR036935">
    <property type="entry name" value="Ribosomal_bL9_N_sf"/>
</dbReference>
<dbReference type="NCBIfam" id="TIGR00158">
    <property type="entry name" value="L9"/>
    <property type="match status" value="1"/>
</dbReference>
<dbReference type="PANTHER" id="PTHR21368">
    <property type="entry name" value="50S RIBOSOMAL PROTEIN L9"/>
    <property type="match status" value="1"/>
</dbReference>
<dbReference type="Pfam" id="PF03948">
    <property type="entry name" value="Ribosomal_L9_C"/>
    <property type="match status" value="1"/>
</dbReference>
<dbReference type="Pfam" id="PF01281">
    <property type="entry name" value="Ribosomal_L9_N"/>
    <property type="match status" value="1"/>
</dbReference>
<dbReference type="SUPFAM" id="SSF55658">
    <property type="entry name" value="L9 N-domain-like"/>
    <property type="match status" value="1"/>
</dbReference>
<dbReference type="SUPFAM" id="SSF55653">
    <property type="entry name" value="Ribosomal protein L9 C-domain"/>
    <property type="match status" value="1"/>
</dbReference>
<dbReference type="PROSITE" id="PS00651">
    <property type="entry name" value="RIBOSOMAL_L9"/>
    <property type="match status" value="1"/>
</dbReference>
<comment type="function">
    <text evidence="1">Binds to the 23S rRNA.</text>
</comment>
<comment type="similarity">
    <text evidence="1">Belongs to the bacterial ribosomal protein bL9 family.</text>
</comment>
<protein>
    <recommendedName>
        <fullName evidence="1">Large ribosomal subunit protein bL9</fullName>
    </recommendedName>
    <alternativeName>
        <fullName evidence="3">50S ribosomal protein L9</fullName>
    </alternativeName>
</protein>
<proteinExistence type="inferred from homology"/>
<keyword id="KW-1185">Reference proteome</keyword>
<keyword id="KW-0687">Ribonucleoprotein</keyword>
<keyword id="KW-0689">Ribosomal protein</keyword>
<keyword id="KW-0694">RNA-binding</keyword>
<keyword id="KW-0699">rRNA-binding</keyword>
<feature type="chain" id="PRO_0000258486" description="Large ribosomal subunit protein bL9">
    <location>
        <begin position="1"/>
        <end position="211"/>
    </location>
</feature>
<feature type="region of interest" description="Disordered" evidence="2">
    <location>
        <begin position="183"/>
        <end position="211"/>
    </location>
</feature>
<feature type="compositionally biased region" description="Acidic residues" evidence="2">
    <location>
        <begin position="202"/>
        <end position="211"/>
    </location>
</feature>
<reference key="1">
    <citation type="journal article" date="2007" name="J. Bacteriol.">
        <title>The complete genome sequence of Roseobacter denitrificans reveals a mixotrophic rather than photosynthetic metabolism.</title>
        <authorList>
            <person name="Swingley W.D."/>
            <person name="Sadekar S."/>
            <person name="Mastrian S.D."/>
            <person name="Matthies H.J."/>
            <person name="Hao J."/>
            <person name="Ramos H."/>
            <person name="Acharya C.R."/>
            <person name="Conrad A.L."/>
            <person name="Taylor H.L."/>
            <person name="Dejesa L.C."/>
            <person name="Shah M.K."/>
            <person name="O'Huallachain M.E."/>
            <person name="Lince M.T."/>
            <person name="Blankenship R.E."/>
            <person name="Beatty J.T."/>
            <person name="Touchman J.W."/>
        </authorList>
    </citation>
    <scope>NUCLEOTIDE SEQUENCE [LARGE SCALE GENOMIC DNA]</scope>
    <source>
        <strain>ATCC 33942 / OCh 114</strain>
    </source>
</reference>
<accession>Q164N5</accession>
<sequence length="211" mass="22468">MQVILLERVAKLGQMGEVVDVKPGYARNFLLPQGKALSASKANIEAFEQQKAQLEARNLETRKEAEALAAKLDGQQFIVIRSASDSGALYGSVTTRDAAEAATEAGFTVDRKQVVLSPIKELGLHAVQVVLHPEVDATIHLNVARSVEEAELQASGKSIQELAAEEEAAAEFEIQELFDDIGAAASEDEELAETAGVAPAEPSEEDDSAKA</sequence>
<evidence type="ECO:0000255" key="1">
    <source>
        <dbReference type="HAMAP-Rule" id="MF_00503"/>
    </source>
</evidence>
<evidence type="ECO:0000256" key="2">
    <source>
        <dbReference type="SAM" id="MobiDB-lite"/>
    </source>
</evidence>
<evidence type="ECO:0000305" key="3"/>
<organism>
    <name type="scientific">Roseobacter denitrificans (strain ATCC 33942 / OCh 114)</name>
    <name type="common">Erythrobacter sp. (strain OCh 114)</name>
    <name type="synonym">Roseobacter denitrificans</name>
    <dbReference type="NCBI Taxonomy" id="375451"/>
    <lineage>
        <taxon>Bacteria</taxon>
        <taxon>Pseudomonadati</taxon>
        <taxon>Pseudomonadota</taxon>
        <taxon>Alphaproteobacteria</taxon>
        <taxon>Rhodobacterales</taxon>
        <taxon>Roseobacteraceae</taxon>
        <taxon>Roseobacter</taxon>
    </lineage>
</organism>
<gene>
    <name evidence="1" type="primary">rplI</name>
    <name type="ordered locus">RD1_3045</name>
</gene>
<name>RL9_ROSDO</name>